<gene>
    <name type="ordered locus">lp_2594</name>
</gene>
<dbReference type="EMBL" id="AL935263">
    <property type="protein sequence ID" value="CCC79741.1"/>
    <property type="molecule type" value="Genomic_DNA"/>
</dbReference>
<dbReference type="RefSeq" id="WP_011101841.1">
    <property type="nucleotide sequence ID" value="NC_004567.2"/>
</dbReference>
<dbReference type="RefSeq" id="YP_004890255.1">
    <property type="nucleotide sequence ID" value="NC_004567.2"/>
</dbReference>
<dbReference type="SMR" id="Q88UB3"/>
<dbReference type="STRING" id="220668.lp_2594"/>
<dbReference type="EnsemblBacteria" id="CCC79741">
    <property type="protein sequence ID" value="CCC79741"/>
    <property type="gene ID" value="lp_2594"/>
</dbReference>
<dbReference type="KEGG" id="lpl:lp_2594"/>
<dbReference type="PATRIC" id="fig|220668.9.peg.2177"/>
<dbReference type="eggNOG" id="COG4975">
    <property type="taxonomic scope" value="Bacteria"/>
</dbReference>
<dbReference type="HOGENOM" id="CLU_076024_0_0_9"/>
<dbReference type="OrthoDB" id="1452595at2"/>
<dbReference type="PhylomeDB" id="Q88UB3"/>
<dbReference type="Proteomes" id="UP000000432">
    <property type="component" value="Chromosome"/>
</dbReference>
<dbReference type="GO" id="GO:0005886">
    <property type="term" value="C:plasma membrane"/>
    <property type="evidence" value="ECO:0007669"/>
    <property type="project" value="UniProtKB-SubCell"/>
</dbReference>
<dbReference type="GO" id="GO:0015144">
    <property type="term" value="F:carbohydrate transmembrane transporter activity"/>
    <property type="evidence" value="ECO:0007669"/>
    <property type="project" value="InterPro"/>
</dbReference>
<dbReference type="CDD" id="cd23110">
    <property type="entry name" value="GRP"/>
    <property type="match status" value="1"/>
</dbReference>
<dbReference type="InterPro" id="IPR010651">
    <property type="entry name" value="Sugar_transport"/>
</dbReference>
<dbReference type="PANTHER" id="PTHR16119">
    <property type="entry name" value="TRANSMEMBRANE PROTEIN 144"/>
    <property type="match status" value="1"/>
</dbReference>
<dbReference type="PANTHER" id="PTHR16119:SF17">
    <property type="entry name" value="TRANSMEMBRANE PROTEIN 144"/>
    <property type="match status" value="1"/>
</dbReference>
<dbReference type="Pfam" id="PF06800">
    <property type="entry name" value="Sugar_transport"/>
    <property type="match status" value="1"/>
</dbReference>
<dbReference type="SUPFAM" id="SSF103481">
    <property type="entry name" value="Multidrug resistance efflux transporter EmrE"/>
    <property type="match status" value="2"/>
</dbReference>
<feature type="chain" id="PRO_0000213654" description="Putative sugar uptake protein lp_2594">
    <location>
        <begin position="1"/>
        <end position="282"/>
    </location>
</feature>
<feature type="transmembrane region" description="Helical" evidence="1">
    <location>
        <begin position="2"/>
        <end position="21"/>
    </location>
</feature>
<feature type="transmembrane region" description="Helical" evidence="1">
    <location>
        <begin position="31"/>
        <end position="48"/>
    </location>
</feature>
<feature type="transmembrane region" description="Helical" evidence="1">
    <location>
        <begin position="53"/>
        <end position="75"/>
    </location>
</feature>
<feature type="transmembrane region" description="Helical" evidence="1">
    <location>
        <begin position="90"/>
        <end position="112"/>
    </location>
</feature>
<feature type="transmembrane region" description="Helical" evidence="1">
    <location>
        <begin position="119"/>
        <end position="136"/>
    </location>
</feature>
<feature type="transmembrane region" description="Helical" evidence="1">
    <location>
        <begin position="146"/>
        <end position="163"/>
    </location>
</feature>
<feature type="transmembrane region" description="Helical" evidence="1">
    <location>
        <begin position="176"/>
        <end position="194"/>
    </location>
</feature>
<feature type="transmembrane region" description="Helical" evidence="1">
    <location>
        <begin position="209"/>
        <end position="226"/>
    </location>
</feature>
<feature type="transmembrane region" description="Helical" evidence="1">
    <location>
        <begin position="233"/>
        <end position="252"/>
    </location>
</feature>
<feature type="transmembrane region" description="Helical" evidence="1">
    <location>
        <begin position="262"/>
        <end position="281"/>
    </location>
</feature>
<reference key="1">
    <citation type="journal article" date="2003" name="Proc. Natl. Acad. Sci. U.S.A.">
        <title>Complete genome sequence of Lactobacillus plantarum WCFS1.</title>
        <authorList>
            <person name="Kleerebezem M."/>
            <person name="Boekhorst J."/>
            <person name="van Kranenburg R."/>
            <person name="Molenaar D."/>
            <person name="Kuipers O.P."/>
            <person name="Leer R."/>
            <person name="Tarchini R."/>
            <person name="Peters S.A."/>
            <person name="Sandbrink H.M."/>
            <person name="Fiers M.W.E.J."/>
            <person name="Stiekema W."/>
            <person name="Klein Lankhorst R.M."/>
            <person name="Bron P.A."/>
            <person name="Hoffer S.M."/>
            <person name="Nierop Groot M.N."/>
            <person name="Kerkhoven R."/>
            <person name="De Vries M."/>
            <person name="Ursing B."/>
            <person name="De Vos W.M."/>
            <person name="Siezen R.J."/>
        </authorList>
    </citation>
    <scope>NUCLEOTIDE SEQUENCE [LARGE SCALE GENOMIC DNA]</scope>
    <source>
        <strain>ATCC BAA-793 / NCIMB 8826 / WCFS1</strain>
    </source>
</reference>
<reference key="2">
    <citation type="journal article" date="2012" name="J. Bacteriol.">
        <title>Complete resequencing and reannotation of the Lactobacillus plantarum WCFS1 genome.</title>
        <authorList>
            <person name="Siezen R.J."/>
            <person name="Francke C."/>
            <person name="Renckens B."/>
            <person name="Boekhorst J."/>
            <person name="Wels M."/>
            <person name="Kleerebezem M."/>
            <person name="van Hijum S.A."/>
        </authorList>
    </citation>
    <scope>NUCLEOTIDE SEQUENCE [LARGE SCALE GENOMIC DNA]</scope>
    <scope>GENOME REANNOTATION</scope>
    <source>
        <strain>ATCC BAA-793 / NCIMB 8826 / WCFS1</strain>
    </source>
</reference>
<evidence type="ECO:0000255" key="1"/>
<evidence type="ECO:0000305" key="2"/>
<organism>
    <name type="scientific">Lactiplantibacillus plantarum (strain ATCC BAA-793 / NCIMB 8826 / WCFS1)</name>
    <name type="common">Lactobacillus plantarum</name>
    <dbReference type="NCBI Taxonomy" id="220668"/>
    <lineage>
        <taxon>Bacteria</taxon>
        <taxon>Bacillati</taxon>
        <taxon>Bacillota</taxon>
        <taxon>Bacilli</taxon>
        <taxon>Lactobacillales</taxon>
        <taxon>Lactobacillaceae</taxon>
        <taxon>Lactiplantibacillus</taxon>
    </lineage>
</organism>
<comment type="subcellular location">
    <subcellularLocation>
        <location evidence="2">Cell membrane</location>
        <topology evidence="2">Multi-pass membrane protein</topology>
    </subcellularLocation>
</comment>
<comment type="similarity">
    <text evidence="2">Belongs to the GRP transporter (TC 2.A.7.5) family.</text>
</comment>
<accession>Q88UB3</accession>
<accession>F9URA2</accession>
<proteinExistence type="inferred from homology"/>
<keyword id="KW-1003">Cell membrane</keyword>
<keyword id="KW-0472">Membrane</keyword>
<keyword id="KW-1185">Reference proteome</keyword>
<keyword id="KW-0762">Sugar transport</keyword>
<keyword id="KW-0812">Transmembrane</keyword>
<keyword id="KW-1133">Transmembrane helix</keyword>
<keyword id="KW-0813">Transport</keyword>
<protein>
    <recommendedName>
        <fullName>Putative sugar uptake protein lp_2594</fullName>
    </recommendedName>
</protein>
<name>Y2594_LACPL</name>
<sequence length="282" mass="30283">MIFLIAIIPALCWGINPLLVGKINGHSENEMFGMGIGDGLIALIFWLFSQPTVTISGVTFGLAMISGAAWAIGQLGQYISYRLLGVSKTMPISTALQLVGTSLIGVLMFGEWGSSNQKILGLLAIMLIVAGSALSAGTSDGRKKGFSCYLPLLMTTIGYWIYSCIPKLVKVDALQLFLPQMLGILIVAVGWAIYHQPTVYRDKQSWQNTLPGILYGIAAFMYILSARSIGVTNAYIIGQLSVVISTLSGLFFLHERTGQQSIVSVATGLLFIFMGCVTTALI</sequence>